<gene>
    <name evidence="1" type="primary">thyA</name>
    <name type="ordered locus">lpl2781</name>
</gene>
<proteinExistence type="inferred from homology"/>
<comment type="function">
    <text evidence="1">Catalyzes the reductive methylation of 2'-deoxyuridine-5'-monophosphate (dUMP) to 2'-deoxythymidine-5'-monophosphate (dTMP) while utilizing 5,10-methylenetetrahydrofolate (mTHF) as the methyl donor and reductant in the reaction, yielding dihydrofolate (DHF) as a by-product. This enzymatic reaction provides an intracellular de novo source of dTMP, an essential precursor for DNA biosynthesis.</text>
</comment>
<comment type="catalytic activity">
    <reaction evidence="1">
        <text>dUMP + (6R)-5,10-methylene-5,6,7,8-tetrahydrofolate = 7,8-dihydrofolate + dTMP</text>
        <dbReference type="Rhea" id="RHEA:12104"/>
        <dbReference type="ChEBI" id="CHEBI:15636"/>
        <dbReference type="ChEBI" id="CHEBI:57451"/>
        <dbReference type="ChEBI" id="CHEBI:63528"/>
        <dbReference type="ChEBI" id="CHEBI:246422"/>
        <dbReference type="EC" id="2.1.1.45"/>
    </reaction>
</comment>
<comment type="pathway">
    <text evidence="1">Pyrimidine metabolism; dTTP biosynthesis.</text>
</comment>
<comment type="subunit">
    <text evidence="1">Homodimer.</text>
</comment>
<comment type="subcellular location">
    <subcellularLocation>
        <location evidence="1">Cytoplasm</location>
    </subcellularLocation>
</comment>
<comment type="similarity">
    <text evidence="1">Belongs to the thymidylate synthase family. Bacterial-type ThyA subfamily.</text>
</comment>
<accession>Q5WSU5</accession>
<reference key="1">
    <citation type="journal article" date="2004" name="Nat. Genet.">
        <title>Evidence in the Legionella pneumophila genome for exploitation of host cell functions and high genome plasticity.</title>
        <authorList>
            <person name="Cazalet C."/>
            <person name="Rusniok C."/>
            <person name="Brueggemann H."/>
            <person name="Zidane N."/>
            <person name="Magnier A."/>
            <person name="Ma L."/>
            <person name="Tichit M."/>
            <person name="Jarraud S."/>
            <person name="Bouchier C."/>
            <person name="Vandenesch F."/>
            <person name="Kunst F."/>
            <person name="Etienne J."/>
            <person name="Glaser P."/>
            <person name="Buchrieser C."/>
        </authorList>
    </citation>
    <scope>NUCLEOTIDE SEQUENCE [LARGE SCALE GENOMIC DNA]</scope>
    <source>
        <strain>Lens</strain>
    </source>
</reference>
<organism>
    <name type="scientific">Legionella pneumophila (strain Lens)</name>
    <dbReference type="NCBI Taxonomy" id="297245"/>
    <lineage>
        <taxon>Bacteria</taxon>
        <taxon>Pseudomonadati</taxon>
        <taxon>Pseudomonadota</taxon>
        <taxon>Gammaproteobacteria</taxon>
        <taxon>Legionellales</taxon>
        <taxon>Legionellaceae</taxon>
        <taxon>Legionella</taxon>
    </lineage>
</organism>
<dbReference type="EC" id="2.1.1.45" evidence="1"/>
<dbReference type="EMBL" id="CR628337">
    <property type="protein sequence ID" value="CAH17024.1"/>
    <property type="molecule type" value="Genomic_DNA"/>
</dbReference>
<dbReference type="RefSeq" id="WP_011216703.1">
    <property type="nucleotide sequence ID" value="NC_006369.1"/>
</dbReference>
<dbReference type="SMR" id="Q5WSU5"/>
<dbReference type="KEGG" id="lpf:lpl2781"/>
<dbReference type="LegioList" id="lpl2781"/>
<dbReference type="HOGENOM" id="CLU_021669_0_0_6"/>
<dbReference type="UniPathway" id="UPA00575"/>
<dbReference type="Proteomes" id="UP000002517">
    <property type="component" value="Chromosome"/>
</dbReference>
<dbReference type="GO" id="GO:0005829">
    <property type="term" value="C:cytosol"/>
    <property type="evidence" value="ECO:0007669"/>
    <property type="project" value="TreeGrafter"/>
</dbReference>
<dbReference type="GO" id="GO:0004799">
    <property type="term" value="F:thymidylate synthase activity"/>
    <property type="evidence" value="ECO:0007669"/>
    <property type="project" value="UniProtKB-UniRule"/>
</dbReference>
<dbReference type="GO" id="GO:0006231">
    <property type="term" value="P:dTMP biosynthetic process"/>
    <property type="evidence" value="ECO:0007669"/>
    <property type="project" value="UniProtKB-UniRule"/>
</dbReference>
<dbReference type="GO" id="GO:0006235">
    <property type="term" value="P:dTTP biosynthetic process"/>
    <property type="evidence" value="ECO:0007669"/>
    <property type="project" value="UniProtKB-UniRule"/>
</dbReference>
<dbReference type="GO" id="GO:0032259">
    <property type="term" value="P:methylation"/>
    <property type="evidence" value="ECO:0007669"/>
    <property type="project" value="UniProtKB-KW"/>
</dbReference>
<dbReference type="CDD" id="cd00351">
    <property type="entry name" value="TS_Pyrimidine_HMase"/>
    <property type="match status" value="1"/>
</dbReference>
<dbReference type="FunFam" id="3.30.572.10:FF:000001">
    <property type="entry name" value="Thymidylate synthase"/>
    <property type="match status" value="1"/>
</dbReference>
<dbReference type="Gene3D" id="3.30.572.10">
    <property type="entry name" value="Thymidylate synthase/dCMP hydroxymethylase domain"/>
    <property type="match status" value="1"/>
</dbReference>
<dbReference type="HAMAP" id="MF_00008">
    <property type="entry name" value="Thymidy_synth_bact"/>
    <property type="match status" value="1"/>
</dbReference>
<dbReference type="InterPro" id="IPR045097">
    <property type="entry name" value="Thymidate_synth/dCMP_Mease"/>
</dbReference>
<dbReference type="InterPro" id="IPR023451">
    <property type="entry name" value="Thymidate_synth/dCMP_Mease_dom"/>
</dbReference>
<dbReference type="InterPro" id="IPR036926">
    <property type="entry name" value="Thymidate_synth/dCMP_Mease_sf"/>
</dbReference>
<dbReference type="InterPro" id="IPR000398">
    <property type="entry name" value="Thymidylate_synthase"/>
</dbReference>
<dbReference type="InterPro" id="IPR020940">
    <property type="entry name" value="Thymidylate_synthase_AS"/>
</dbReference>
<dbReference type="NCBIfam" id="NF002497">
    <property type="entry name" value="PRK01827.1-3"/>
    <property type="match status" value="1"/>
</dbReference>
<dbReference type="NCBIfam" id="NF002499">
    <property type="entry name" value="PRK01827.1-5"/>
    <property type="match status" value="1"/>
</dbReference>
<dbReference type="NCBIfam" id="TIGR03284">
    <property type="entry name" value="thym_sym"/>
    <property type="match status" value="2"/>
</dbReference>
<dbReference type="PANTHER" id="PTHR11548:SF9">
    <property type="entry name" value="THYMIDYLATE SYNTHASE"/>
    <property type="match status" value="1"/>
</dbReference>
<dbReference type="PANTHER" id="PTHR11548">
    <property type="entry name" value="THYMIDYLATE SYNTHASE 1"/>
    <property type="match status" value="1"/>
</dbReference>
<dbReference type="Pfam" id="PF00303">
    <property type="entry name" value="Thymidylat_synt"/>
    <property type="match status" value="1"/>
</dbReference>
<dbReference type="PRINTS" id="PR00108">
    <property type="entry name" value="THYMDSNTHASE"/>
</dbReference>
<dbReference type="SUPFAM" id="SSF55831">
    <property type="entry name" value="Thymidylate synthase/dCMP hydroxymethylase"/>
    <property type="match status" value="1"/>
</dbReference>
<dbReference type="PROSITE" id="PS00091">
    <property type="entry name" value="THYMIDYLATE_SYNTHASE"/>
    <property type="match status" value="1"/>
</dbReference>
<evidence type="ECO:0000255" key="1">
    <source>
        <dbReference type="HAMAP-Rule" id="MF_00008"/>
    </source>
</evidence>
<name>TYSY_LEGPL</name>
<keyword id="KW-0963">Cytoplasm</keyword>
<keyword id="KW-0489">Methyltransferase</keyword>
<keyword id="KW-0545">Nucleotide biosynthesis</keyword>
<keyword id="KW-0808">Transferase</keyword>
<feature type="chain" id="PRO_0000140973" description="Thymidylate synthase">
    <location>
        <begin position="1"/>
        <end position="264"/>
    </location>
</feature>
<feature type="active site" description="Nucleophile" evidence="1">
    <location>
        <position position="146"/>
    </location>
</feature>
<feature type="binding site" description="in other chain" evidence="1">
    <location>
        <position position="21"/>
    </location>
    <ligand>
        <name>dUMP</name>
        <dbReference type="ChEBI" id="CHEBI:246422"/>
        <note>ligand shared between dimeric partners</note>
    </ligand>
</feature>
<feature type="binding site" evidence="1">
    <location>
        <position position="51"/>
    </location>
    <ligand>
        <name>(6R)-5,10-methylene-5,6,7,8-tetrahydrofolate</name>
        <dbReference type="ChEBI" id="CHEBI:15636"/>
    </ligand>
</feature>
<feature type="binding site" evidence="1">
    <location>
        <begin position="126"/>
        <end position="127"/>
    </location>
    <ligand>
        <name>dUMP</name>
        <dbReference type="ChEBI" id="CHEBI:246422"/>
        <note>ligand shared between dimeric partners</note>
    </ligand>
</feature>
<feature type="binding site" description="in other chain" evidence="1">
    <location>
        <begin position="166"/>
        <end position="169"/>
    </location>
    <ligand>
        <name>dUMP</name>
        <dbReference type="ChEBI" id="CHEBI:246422"/>
        <note>ligand shared between dimeric partners</note>
    </ligand>
</feature>
<feature type="binding site" evidence="1">
    <location>
        <position position="169"/>
    </location>
    <ligand>
        <name>(6R)-5,10-methylene-5,6,7,8-tetrahydrofolate</name>
        <dbReference type="ChEBI" id="CHEBI:15636"/>
    </ligand>
</feature>
<feature type="binding site" description="in other chain" evidence="1">
    <location>
        <position position="177"/>
    </location>
    <ligand>
        <name>dUMP</name>
        <dbReference type="ChEBI" id="CHEBI:246422"/>
        <note>ligand shared between dimeric partners</note>
    </ligand>
</feature>
<feature type="binding site" description="in other chain" evidence="1">
    <location>
        <begin position="207"/>
        <end position="209"/>
    </location>
    <ligand>
        <name>dUMP</name>
        <dbReference type="ChEBI" id="CHEBI:246422"/>
        <note>ligand shared between dimeric partners</note>
    </ligand>
</feature>
<feature type="binding site" evidence="1">
    <location>
        <position position="263"/>
    </location>
    <ligand>
        <name>(6R)-5,10-methylene-5,6,7,8-tetrahydrofolate</name>
        <dbReference type="ChEBI" id="CHEBI:15636"/>
    </ligand>
</feature>
<sequence>MKTYLQLLEHILQHGVEKSDRTGTGTLSVFGYQMRFDLAKGFPLVTTKKLHTRSIVHELLWFLRGDTNISYLKENGVTIWDEWADNNGDLGPVYGKQWRSWPTADGGTIDQLSDVVQQIKSNPDSRRLIVSAWNVGELDKMALMPCHALFQFYVANNKLSCQLYQRSADVFLGVPFNIASYSLLTHMVAQQCNLDVAEFIWTGGDCHLYLNHLEQAQTQLTREPLPLPSLAIKRKPASLFDYAYEDFEFVNYQSHPAIKAPIAV</sequence>
<protein>
    <recommendedName>
        <fullName evidence="1">Thymidylate synthase</fullName>
        <shortName evidence="1">TS</shortName>
        <shortName evidence="1">TSase</shortName>
        <ecNumber evidence="1">2.1.1.45</ecNumber>
    </recommendedName>
</protein>